<sequence>MKTLLLTLVVVTIVCLDLGYTMTCYTQYSLSPPTTKTCPDGQNLCYKRWFAFIPHGNKFFRGCAAACPKAEHNEVVRCCARDKCNL</sequence>
<feature type="signal peptide" evidence="1">
    <location>
        <begin position="1"/>
        <end position="21"/>
    </location>
</feature>
<feature type="chain" id="PRO_5000006495" description="Muscarinic toxin 38">
    <location>
        <begin position="22"/>
        <end position="86"/>
    </location>
</feature>
<feature type="disulfide bond" evidence="2">
    <location>
        <begin position="24"/>
        <end position="45"/>
    </location>
</feature>
<feature type="disulfide bond" evidence="2">
    <location>
        <begin position="38"/>
        <end position="63"/>
    </location>
</feature>
<feature type="disulfide bond" evidence="2">
    <location>
        <begin position="67"/>
        <end position="78"/>
    </location>
</feature>
<feature type="disulfide bond" evidence="2">
    <location>
        <begin position="79"/>
        <end position="84"/>
    </location>
</feature>
<protein>
    <recommendedName>
        <fullName>Muscarinic toxin 38</fullName>
        <shortName>MTX38</shortName>
    </recommendedName>
</protein>
<comment type="function">
    <text evidence="1">Binds to the muscarinic acetylcholine receptor (CHRM).</text>
</comment>
<comment type="subunit">
    <text evidence="1">Monomer.</text>
</comment>
<comment type="subcellular location">
    <subcellularLocation>
        <location evidence="1">Secreted</location>
    </subcellularLocation>
</comment>
<comment type="tissue specificity">
    <text evidence="3">Expressed by the venom gland.</text>
</comment>
<comment type="miscellaneous">
    <text evidence="3">Is classified as a P-type cytotoxin, since a proline residue stands at position 54 (Pro-31 in standard classification).</text>
</comment>
<comment type="similarity">
    <text evidence="3">Belongs to the three-finger toxin family. Short-chain subfamily. Aminergic toxin sub-subfamily.</text>
</comment>
<reference key="1">
    <citation type="journal article" date="2006" name="Biochem. J.">
        <title>Novel genes encoding six kinds of three-finger toxins in Ophiophagus hannah (king cobra) and function characterization of two recombinant long-chain neurotoxins.</title>
        <authorList>
            <person name="Li J."/>
            <person name="Zhang H."/>
            <person name="Liu J."/>
            <person name="Xu K."/>
        </authorList>
    </citation>
    <scope>NUCLEOTIDE SEQUENCE [MRNA]</scope>
    <source>
        <tissue>Venom gland</tissue>
    </source>
</reference>
<keyword id="KW-1015">Disulfide bond</keyword>
<keyword id="KW-1214">G-protein coupled acetylcholine receptor impairing toxin</keyword>
<keyword id="KW-1213">G-protein coupled receptor impairing toxin</keyword>
<keyword id="KW-0528">Neurotoxin</keyword>
<keyword id="KW-0629">Postsynaptic neurotoxin</keyword>
<keyword id="KW-0964">Secreted</keyword>
<keyword id="KW-0732">Signal</keyword>
<keyword id="KW-0800">Toxin</keyword>
<evidence type="ECO:0000250" key="1"/>
<evidence type="ECO:0000250" key="2">
    <source>
        <dbReference type="UniProtKB" id="P60301"/>
    </source>
</evidence>
<evidence type="ECO:0000305" key="3"/>
<organism>
    <name type="scientific">Ophiophagus hannah</name>
    <name type="common">King cobra</name>
    <name type="synonym">Naja hannah</name>
    <dbReference type="NCBI Taxonomy" id="8665"/>
    <lineage>
        <taxon>Eukaryota</taxon>
        <taxon>Metazoa</taxon>
        <taxon>Chordata</taxon>
        <taxon>Craniata</taxon>
        <taxon>Vertebrata</taxon>
        <taxon>Euteleostomi</taxon>
        <taxon>Lepidosauria</taxon>
        <taxon>Squamata</taxon>
        <taxon>Bifurcata</taxon>
        <taxon>Unidentata</taxon>
        <taxon>Episquamata</taxon>
        <taxon>Toxicofera</taxon>
        <taxon>Serpentes</taxon>
        <taxon>Colubroidea</taxon>
        <taxon>Elapidae</taxon>
        <taxon>Elapinae</taxon>
        <taxon>Ophiophagus</taxon>
    </lineage>
</organism>
<proteinExistence type="inferred from homology"/>
<dbReference type="EMBL" id="DQ273585">
    <property type="protein sequence ID" value="ABB83639.1"/>
    <property type="molecule type" value="mRNA"/>
</dbReference>
<dbReference type="SMR" id="Q2VBN0"/>
<dbReference type="GO" id="GO:0005576">
    <property type="term" value="C:extracellular region"/>
    <property type="evidence" value="ECO:0007669"/>
    <property type="project" value="UniProtKB-SubCell"/>
</dbReference>
<dbReference type="GO" id="GO:0090729">
    <property type="term" value="F:toxin activity"/>
    <property type="evidence" value="ECO:0007669"/>
    <property type="project" value="UniProtKB-KW"/>
</dbReference>
<dbReference type="CDD" id="cd00206">
    <property type="entry name" value="TFP_snake_toxin"/>
    <property type="match status" value="1"/>
</dbReference>
<dbReference type="FunFam" id="2.10.60.10:FF:000024">
    <property type="entry name" value="Cytotoxin 1"/>
    <property type="match status" value="1"/>
</dbReference>
<dbReference type="Gene3D" id="2.10.60.10">
    <property type="entry name" value="CD59"/>
    <property type="match status" value="1"/>
</dbReference>
<dbReference type="InterPro" id="IPR003572">
    <property type="entry name" value="Cytotoxin_Cobra"/>
</dbReference>
<dbReference type="InterPro" id="IPR003571">
    <property type="entry name" value="Snake_3FTx"/>
</dbReference>
<dbReference type="InterPro" id="IPR045860">
    <property type="entry name" value="Snake_toxin-like_sf"/>
</dbReference>
<dbReference type="InterPro" id="IPR018354">
    <property type="entry name" value="Snake_toxin_con_site"/>
</dbReference>
<dbReference type="InterPro" id="IPR054131">
    <property type="entry name" value="Toxin_cobra-type"/>
</dbReference>
<dbReference type="Pfam" id="PF21947">
    <property type="entry name" value="Toxin_cobra-type"/>
    <property type="match status" value="1"/>
</dbReference>
<dbReference type="PRINTS" id="PR00282">
    <property type="entry name" value="CYTOTOXIN"/>
</dbReference>
<dbReference type="SUPFAM" id="SSF57302">
    <property type="entry name" value="Snake toxin-like"/>
    <property type="match status" value="1"/>
</dbReference>
<dbReference type="PROSITE" id="PS00272">
    <property type="entry name" value="SNAKE_TOXIN"/>
    <property type="match status" value="1"/>
</dbReference>
<accession>Q2VBN0</accession>
<name>3SIM8_OPHHA</name>